<protein>
    <recommendedName>
        <fullName evidence="3">Adenylyltransferase and sulfurtransferase MOCS3</fullName>
    </recommendedName>
    <alternativeName>
        <fullName evidence="3">Molybdenum cofactor synthesis protein 3</fullName>
    </alternativeName>
    <alternativeName>
        <fullName evidence="2">Ubiquitin activating enzyme 4</fullName>
    </alternativeName>
    <domain>
        <recommendedName>
            <fullName evidence="3">Molybdopterin-synthase adenylyltransferase</fullName>
            <ecNumber evidence="3">2.7.7.80</ecNumber>
        </recommendedName>
        <alternativeName>
            <fullName evidence="3">Adenylyltransferase MOCS3</fullName>
        </alternativeName>
        <alternativeName>
            <fullName evidence="3">Sulfur carrier protein MOCS2A adenylyltransferase</fullName>
        </alternativeName>
    </domain>
    <domain>
        <recommendedName>
            <fullName evidence="3">Molybdopterin-synthase sulfurtransferase</fullName>
            <ecNumber evidence="3">2.8.1.11</ecNumber>
        </recommendedName>
        <alternativeName>
            <fullName evidence="3">Sulfur carrier protein MOCS2A sulfurtransferase</fullName>
        </alternativeName>
        <alternativeName>
            <fullName evidence="3">Sulfurtransferase MOCS3</fullName>
        </alternativeName>
    </domain>
</protein>
<keyword id="KW-0067">ATP-binding</keyword>
<keyword id="KW-0963">Cytoplasm</keyword>
<keyword id="KW-0479">Metal-binding</keyword>
<keyword id="KW-0501">Molybdenum cofactor biosynthesis</keyword>
<keyword id="KW-0511">Multifunctional enzyme</keyword>
<keyword id="KW-0547">Nucleotide-binding</keyword>
<keyword id="KW-0548">Nucleotidyltransferase</keyword>
<keyword id="KW-1185">Reference proteome</keyword>
<keyword id="KW-0808">Transferase</keyword>
<keyword id="KW-0819">tRNA processing</keyword>
<keyword id="KW-0862">Zinc</keyword>
<proteinExistence type="inferred from homology"/>
<dbReference type="EC" id="2.7.7.80" evidence="3"/>
<dbReference type="EC" id="2.8.1.11" evidence="3"/>
<dbReference type="EMBL" id="CH916368">
    <property type="protein sequence ID" value="EDW02929.1"/>
    <property type="molecule type" value="Genomic_DNA"/>
</dbReference>
<dbReference type="SMR" id="B4JBC4"/>
<dbReference type="FunCoup" id="B4JBC4">
    <property type="interactions" value="416"/>
</dbReference>
<dbReference type="STRING" id="7222.B4JBC4"/>
<dbReference type="EnsemblMetazoa" id="FBtr0146373">
    <property type="protein sequence ID" value="FBpp0144865"/>
    <property type="gene ID" value="FBgn0118440"/>
</dbReference>
<dbReference type="EnsemblMetazoa" id="XM_001988026.2">
    <property type="protein sequence ID" value="XP_001988062.1"/>
    <property type="gene ID" value="LOC6561888"/>
</dbReference>
<dbReference type="GeneID" id="6561888"/>
<dbReference type="KEGG" id="dgr:6561888"/>
<dbReference type="CTD" id="34187"/>
<dbReference type="eggNOG" id="KOG2017">
    <property type="taxonomic scope" value="Eukaryota"/>
</dbReference>
<dbReference type="HOGENOM" id="CLU_013325_1_2_1"/>
<dbReference type="InParanoid" id="B4JBC4"/>
<dbReference type="OMA" id="IPDVGMD"/>
<dbReference type="OrthoDB" id="10261062at2759"/>
<dbReference type="PhylomeDB" id="B4JBC4"/>
<dbReference type="UniPathway" id="UPA00344"/>
<dbReference type="UniPathway" id="UPA00988"/>
<dbReference type="Proteomes" id="UP000001070">
    <property type="component" value="Unassembled WGS sequence"/>
</dbReference>
<dbReference type="GO" id="GO:0005829">
    <property type="term" value="C:cytosol"/>
    <property type="evidence" value="ECO:0000250"/>
    <property type="project" value="UniProtKB"/>
</dbReference>
<dbReference type="GO" id="GO:0005524">
    <property type="term" value="F:ATP binding"/>
    <property type="evidence" value="ECO:0007669"/>
    <property type="project" value="UniProtKB-KW"/>
</dbReference>
<dbReference type="GO" id="GO:0046872">
    <property type="term" value="F:metal ion binding"/>
    <property type="evidence" value="ECO:0007669"/>
    <property type="project" value="UniProtKB-KW"/>
</dbReference>
<dbReference type="GO" id="GO:0061605">
    <property type="term" value="F:molybdopterin-synthase adenylyltransferase activity"/>
    <property type="evidence" value="ECO:0007669"/>
    <property type="project" value="UniProtKB-EC"/>
</dbReference>
<dbReference type="GO" id="GO:0061604">
    <property type="term" value="F:molybdopterin-synthase sulfurtransferase activity"/>
    <property type="evidence" value="ECO:0000250"/>
    <property type="project" value="UniProtKB"/>
</dbReference>
<dbReference type="GO" id="GO:0004792">
    <property type="term" value="F:thiosulfate-cyanide sulfurtransferase activity"/>
    <property type="evidence" value="ECO:0007669"/>
    <property type="project" value="TreeGrafter"/>
</dbReference>
<dbReference type="GO" id="GO:0042292">
    <property type="term" value="F:URM1 activating enzyme activity"/>
    <property type="evidence" value="ECO:0007669"/>
    <property type="project" value="TreeGrafter"/>
</dbReference>
<dbReference type="GO" id="GO:0006777">
    <property type="term" value="P:Mo-molybdopterin cofactor biosynthetic process"/>
    <property type="evidence" value="ECO:0000250"/>
    <property type="project" value="UniProtKB"/>
</dbReference>
<dbReference type="GO" id="GO:0032447">
    <property type="term" value="P:protein urmylation"/>
    <property type="evidence" value="ECO:0007669"/>
    <property type="project" value="EnsemblMetazoa"/>
</dbReference>
<dbReference type="GO" id="GO:0002143">
    <property type="term" value="P:tRNA wobble position uridine thiolation"/>
    <property type="evidence" value="ECO:0007669"/>
    <property type="project" value="InterPro"/>
</dbReference>
<dbReference type="CDD" id="cd01526">
    <property type="entry name" value="RHOD_ThiF"/>
    <property type="match status" value="1"/>
</dbReference>
<dbReference type="CDD" id="cd00757">
    <property type="entry name" value="ThiF_MoeB_HesA_family"/>
    <property type="match status" value="1"/>
</dbReference>
<dbReference type="FunFam" id="3.40.250.10:FF:000014">
    <property type="entry name" value="Adenylyltransferase and sulfurtransferase MOCS3"/>
    <property type="match status" value="1"/>
</dbReference>
<dbReference type="FunFam" id="3.40.50.720:FF:000206">
    <property type="entry name" value="Adenylyltransferase and sulfurtransferase MOCS3"/>
    <property type="match status" value="1"/>
</dbReference>
<dbReference type="Gene3D" id="3.40.50.720">
    <property type="entry name" value="NAD(P)-binding Rossmann-like Domain"/>
    <property type="match status" value="1"/>
</dbReference>
<dbReference type="Gene3D" id="3.40.250.10">
    <property type="entry name" value="Rhodanese-like domain"/>
    <property type="match status" value="1"/>
</dbReference>
<dbReference type="HAMAP" id="MF_03049">
    <property type="entry name" value="MOCS3_Uba4"/>
    <property type="match status" value="1"/>
</dbReference>
<dbReference type="InterPro" id="IPR028885">
    <property type="entry name" value="MOCS3/Uba4"/>
</dbReference>
<dbReference type="InterPro" id="IPR001763">
    <property type="entry name" value="Rhodanese-like_dom"/>
</dbReference>
<dbReference type="InterPro" id="IPR036873">
    <property type="entry name" value="Rhodanese-like_dom_sf"/>
</dbReference>
<dbReference type="InterPro" id="IPR045886">
    <property type="entry name" value="ThiF/MoeB/HesA"/>
</dbReference>
<dbReference type="InterPro" id="IPR000594">
    <property type="entry name" value="ThiF_NAD_FAD-bd"/>
</dbReference>
<dbReference type="InterPro" id="IPR035985">
    <property type="entry name" value="Ubiquitin-activating_enz"/>
</dbReference>
<dbReference type="NCBIfam" id="NF004281">
    <property type="entry name" value="PRK05690.1"/>
    <property type="match status" value="1"/>
</dbReference>
<dbReference type="PANTHER" id="PTHR10953:SF102">
    <property type="entry name" value="ADENYLYLTRANSFERASE AND SULFURTRANSFERASE MOCS3"/>
    <property type="match status" value="1"/>
</dbReference>
<dbReference type="PANTHER" id="PTHR10953">
    <property type="entry name" value="UBIQUITIN-ACTIVATING ENZYME E1"/>
    <property type="match status" value="1"/>
</dbReference>
<dbReference type="Pfam" id="PF00581">
    <property type="entry name" value="Rhodanese"/>
    <property type="match status" value="1"/>
</dbReference>
<dbReference type="Pfam" id="PF00899">
    <property type="entry name" value="ThiF"/>
    <property type="match status" value="1"/>
</dbReference>
<dbReference type="SMART" id="SM00450">
    <property type="entry name" value="RHOD"/>
    <property type="match status" value="1"/>
</dbReference>
<dbReference type="SUPFAM" id="SSF69572">
    <property type="entry name" value="Activating enzymes of the ubiquitin-like proteins"/>
    <property type="match status" value="1"/>
</dbReference>
<dbReference type="PROSITE" id="PS50206">
    <property type="entry name" value="RHODANESE_3"/>
    <property type="match status" value="1"/>
</dbReference>
<accession>B4JBC4</accession>
<sequence>MIAARGAPEIEKAKLRLEIAELQAVLNAKEQQLLELQSTISTGASNGGEPESKQDHQKLSNDDIARYSRQLILPDFGIGGQLKLKNSAVLIVGIGGLGCPAAQYLAGAGCGSLGLVDYDQVERSNLHRQTLHTVARCGLSKAESARIALLELNPHCHITCHASLLNRFNAMDIMHGYDVVLDCSDNVATRYLLNDACVMLGKPLVSGSALKLDGQITVYNYGTQGPCYRCIFPVPPPPEAVTNCGDGGVLGAVTGTIGAMQALEAIKLIVGLGDVLAGRLLIFDGSSCQFRNIRIRSKRANCHVCSDQPLITQLIDYEVFCGMHATDKDNPLQLLEPEQRITVVDYQKSLQDKPHLLLDVRAQAEFEICQLPQAINVPLAQILDGSYLQQLDAQFKSSGFPIVVVCRRGNDSQIAVQHMKNQFPEHFIRDLKGGLHAWTNQIDENFPIY</sequence>
<reference key="1">
    <citation type="journal article" date="2007" name="Nature">
        <title>Evolution of genes and genomes on the Drosophila phylogeny.</title>
        <authorList>
            <consortium name="Drosophila 12 genomes consortium"/>
        </authorList>
    </citation>
    <scope>NUCLEOTIDE SEQUENCE [LARGE SCALE GENOMIC DNA]</scope>
    <source>
        <strain>Tucson 15287-2541.00</strain>
    </source>
</reference>
<evidence type="ECO:0000250" key="1">
    <source>
        <dbReference type="UniProtKB" id="O95396"/>
    </source>
</evidence>
<evidence type="ECO:0000250" key="2">
    <source>
        <dbReference type="UniProtKB" id="Q9VLJ8"/>
    </source>
</evidence>
<evidence type="ECO:0000255" key="3">
    <source>
        <dbReference type="HAMAP-Rule" id="MF_03049"/>
    </source>
</evidence>
<feature type="chain" id="PRO_0000369203" description="Adenylyltransferase and sulfurtransferase MOCS3">
    <location>
        <begin position="1"/>
        <end position="449"/>
    </location>
</feature>
<feature type="domain" description="Rhodanese" evidence="3">
    <location>
        <begin position="351"/>
        <end position="447"/>
    </location>
</feature>
<feature type="active site" description="Glycyl thioester intermediate; for adenylyltransferase activity" evidence="3">
    <location>
        <position position="244"/>
    </location>
</feature>
<feature type="active site" description="Cysteine persulfide intermediate; for sulfurtransferase activity" evidence="3">
    <location>
        <position position="406"/>
    </location>
</feature>
<feature type="binding site" evidence="3">
    <location>
        <position position="96"/>
    </location>
    <ligand>
        <name>ATP</name>
        <dbReference type="ChEBI" id="CHEBI:30616"/>
    </ligand>
</feature>
<feature type="binding site" evidence="3">
    <location>
        <position position="117"/>
    </location>
    <ligand>
        <name>ATP</name>
        <dbReference type="ChEBI" id="CHEBI:30616"/>
    </ligand>
</feature>
<feature type="binding site" evidence="3">
    <location>
        <begin position="124"/>
        <end position="128"/>
    </location>
    <ligand>
        <name>ATP</name>
        <dbReference type="ChEBI" id="CHEBI:30616"/>
    </ligand>
</feature>
<feature type="binding site" evidence="3">
    <location>
        <position position="141"/>
    </location>
    <ligand>
        <name>ATP</name>
        <dbReference type="ChEBI" id="CHEBI:30616"/>
    </ligand>
</feature>
<feature type="binding site" evidence="3">
    <location>
        <begin position="185"/>
        <end position="186"/>
    </location>
    <ligand>
        <name>ATP</name>
        <dbReference type="ChEBI" id="CHEBI:30616"/>
    </ligand>
</feature>
<feature type="binding site" evidence="3">
    <location>
        <position position="227"/>
    </location>
    <ligand>
        <name>Zn(2+)</name>
        <dbReference type="ChEBI" id="CHEBI:29105"/>
    </ligand>
</feature>
<feature type="binding site" evidence="3">
    <location>
        <position position="230"/>
    </location>
    <ligand>
        <name>Zn(2+)</name>
        <dbReference type="ChEBI" id="CHEBI:29105"/>
    </ligand>
</feature>
<feature type="binding site" evidence="3">
    <location>
        <position position="302"/>
    </location>
    <ligand>
        <name>Zn(2+)</name>
        <dbReference type="ChEBI" id="CHEBI:29105"/>
    </ligand>
</feature>
<feature type="binding site" evidence="3">
    <location>
        <position position="305"/>
    </location>
    <ligand>
        <name>Zn(2+)</name>
        <dbReference type="ChEBI" id="CHEBI:29105"/>
    </ligand>
</feature>
<comment type="function">
    <text evidence="3">Plays a central role in 2-thiolation of mcm(5)S(2)U at tRNA wobble positions of cytosolic tRNA(Lys), tRNA(Glu) and tRNA(Gln). Also essential during biosynthesis of the molybdenum cofactor. Acts by mediating the C-terminal thiocarboxylation of sulfur carriers URM1 and MOCS2A. Its N-terminus first activates URM1 and MOCS2A as acyl-adenylates (-COAMP), then the persulfide sulfur on the catalytic cysteine is transferred to URM1 and MOCS2A to form thiocarboxylation (-COSH) of their C-terminus. The reaction probably involves hydrogen sulfide that is generated from the persulfide intermediate and that acts as a nucleophile towards URM1 and MOCS2A. Subsequently, a transient disulfide bond is formed. Does not use thiosulfate as sulfur donor; NFS1 probably acting as a sulfur donor for thiocarboxylation reactions.</text>
</comment>
<comment type="catalytic activity">
    <reaction evidence="3">
        <text>[molybdopterin-synthase sulfur-carrier protein]-C-terminal Gly-Gly + ATP + H(+) = [molybdopterin-synthase sulfur-carrier protein]-C-terminal Gly-Gly-AMP + diphosphate</text>
        <dbReference type="Rhea" id="RHEA:43616"/>
        <dbReference type="Rhea" id="RHEA-COMP:12159"/>
        <dbReference type="Rhea" id="RHEA-COMP:12202"/>
        <dbReference type="ChEBI" id="CHEBI:15378"/>
        <dbReference type="ChEBI" id="CHEBI:30616"/>
        <dbReference type="ChEBI" id="CHEBI:33019"/>
        <dbReference type="ChEBI" id="CHEBI:90618"/>
        <dbReference type="ChEBI" id="CHEBI:90778"/>
        <dbReference type="EC" id="2.7.7.80"/>
    </reaction>
</comment>
<comment type="catalytic activity">
    <reaction evidence="3">
        <text>[molybdopterin-synthase sulfur-carrier protein]-C-terminal Gly-Gly-AMP + S-sulfanyl-L-cysteinyl-[cysteine desulfurase] + AH2 = [molybdopterin-synthase sulfur-carrier protein]-C-terminal-Gly-aminoethanethioate + L-cysteinyl-[cysteine desulfurase] + A + AMP + 2 H(+)</text>
        <dbReference type="Rhea" id="RHEA:48612"/>
        <dbReference type="Rhea" id="RHEA-COMP:12157"/>
        <dbReference type="Rhea" id="RHEA-COMP:12158"/>
        <dbReference type="Rhea" id="RHEA-COMP:12159"/>
        <dbReference type="Rhea" id="RHEA-COMP:19907"/>
        <dbReference type="ChEBI" id="CHEBI:13193"/>
        <dbReference type="ChEBI" id="CHEBI:15378"/>
        <dbReference type="ChEBI" id="CHEBI:17499"/>
        <dbReference type="ChEBI" id="CHEBI:29950"/>
        <dbReference type="ChEBI" id="CHEBI:61963"/>
        <dbReference type="ChEBI" id="CHEBI:90618"/>
        <dbReference type="ChEBI" id="CHEBI:232372"/>
        <dbReference type="ChEBI" id="CHEBI:456215"/>
        <dbReference type="EC" id="2.8.1.11"/>
    </reaction>
</comment>
<comment type="cofactor">
    <cofactor evidence="3">
        <name>Zn(2+)</name>
        <dbReference type="ChEBI" id="CHEBI:29105"/>
    </cofactor>
    <text evidence="3">Binds 1 zinc ion per subunit.</text>
</comment>
<comment type="pathway">
    <text evidence="3">tRNA modification; 5-methoxycarbonylmethyl-2-thiouridine-tRNA biosynthesis.</text>
</comment>
<comment type="pathway">
    <text evidence="3">Cofactor biosynthesis; molybdopterin biosynthesis.</text>
</comment>
<comment type="subcellular location">
    <subcellularLocation>
        <location evidence="1">Cytoplasm</location>
        <location evidence="1">Cytosol</location>
    </subcellularLocation>
</comment>
<comment type="similarity">
    <text evidence="3">In the N-terminal section; belongs to the HesA/MoeB/ThiF family. UBA4 subfamily.</text>
</comment>
<organism>
    <name type="scientific">Drosophila grimshawi</name>
    <name type="common">Hawaiian fruit fly</name>
    <name type="synonym">Idiomyia grimshawi</name>
    <dbReference type="NCBI Taxonomy" id="7222"/>
    <lineage>
        <taxon>Eukaryota</taxon>
        <taxon>Metazoa</taxon>
        <taxon>Ecdysozoa</taxon>
        <taxon>Arthropoda</taxon>
        <taxon>Hexapoda</taxon>
        <taxon>Insecta</taxon>
        <taxon>Pterygota</taxon>
        <taxon>Neoptera</taxon>
        <taxon>Endopterygota</taxon>
        <taxon>Diptera</taxon>
        <taxon>Brachycera</taxon>
        <taxon>Muscomorpha</taxon>
        <taxon>Ephydroidea</taxon>
        <taxon>Drosophilidae</taxon>
        <taxon>Drosophila</taxon>
        <taxon>Hawaiian Drosophila</taxon>
    </lineage>
</organism>
<name>MOCS3_DROGR</name>
<gene>
    <name evidence="2" type="primary">Uba4</name>
    <name type="ORF">GH10959</name>
</gene>